<proteinExistence type="evidence at protein level"/>
<accession>P13182</accession>
<accession>Q24JY9</accession>
<sequence length="109" mass="12073">MAAAAGSRVFGLLGRSRLQLSRCMSSGAHGEEGSARMWKALTYFVALPGVGVSMLNVFLKSHHGEEERPEFVAYPHLRIRSKPFPWGDGNHTLFHNPHVNPLPTGYEDE</sequence>
<comment type="function">
    <text evidence="3">Component of the cytochrome c oxidase, the last enzyme in the mitochondrial electron transport chain which drives oxidative phosphorylation. The respiratory chain contains 3 multisubunit complexes succinate dehydrogenase (complex II, CII), ubiquinol-cytochrome c oxidoreductase (cytochrome b-c1 complex, complex III, CIII) and cytochrome c oxidase (complex IV, CIV), that cooperate to transfer electrons derived from NADH and succinate to molecular oxygen, creating an electrochemical gradient over the inner membrane that drives transmembrane transport and the ATP synthase. Cytochrome c oxidase is the component of the respiratory chain that catalyzes the reduction of oxygen to water. Electrons originating from reduced cytochrome c in the intermembrane space (IMS) are transferred via the dinuclear copper A center (CU(A)) of subunit 2 and heme A of subunit 1 to the active site in subunit 1, a binuclear center (BNC) formed by heme A3 and copper B (CU(B)). The BNC reduces molecular oxygen to 2 water molecules unsing 4 electrons from cytochrome c in the IMS and 4 protons from the mitochondrial matrix.</text>
</comment>
<comment type="pathway">
    <text evidence="3">Energy metabolism; oxidative phosphorylation.</text>
</comment>
<comment type="subunit">
    <text evidence="2">Component of the cytochrome c oxidase (complex IV, CIV), a multisubunit enzyme composed of 14 subunits. The complex is composed of a catalytic core of 3 subunits MT-CO1, MT-CO2 and MT-CO3, encoded in the mitochondrial DNA, and 11 supernumerary subunits COX4I1 (or COX4I2), COX5A, COX5B, COX6A2 (or COX6A1), COX6B1 (or COX6B2), COX6C, COX7A1 (or COX7A2), COX7B, COX7C, COX8B and NDUFA4, which are encoded in the nuclear genome (By similarity). The complex exists as a monomer or a dimer and forms supercomplexes (SCs) in the inner mitochondrial membrane with NADH-ubiquinone oxidoreductase (complex I, CI) and ubiquinol-cytochrome c oxidoreductase (cytochrome b-c1 complex, complex III, CIII), resulting in different assemblies (supercomplex SCI(1)III(2)IV(1) and megacomplex MCI(2)III(2)IV(2)) (By similarity).</text>
</comment>
<comment type="subcellular location">
    <subcellularLocation>
        <location evidence="2">Mitochondrion inner membrane</location>
        <topology evidence="2">Single-pass membrane protein</topology>
    </subcellularLocation>
</comment>
<comment type="similarity">
    <text evidence="5">Belongs to the cytochrome c oxidase subunit 6A family.</text>
</comment>
<gene>
    <name type="primary">COX6A1</name>
</gene>
<name>CX6A1_BOVIN</name>
<dbReference type="EMBL" id="BC114182">
    <property type="protein sequence ID" value="AAI14183.1"/>
    <property type="molecule type" value="mRNA"/>
</dbReference>
<dbReference type="EMBL" id="M38520">
    <property type="protein sequence ID" value="AAA30437.1"/>
    <property type="molecule type" value="mRNA"/>
</dbReference>
<dbReference type="PIR" id="S18314">
    <property type="entry name" value="S18314"/>
</dbReference>
<dbReference type="RefSeq" id="NP_001071299.1">
    <property type="nucleotide sequence ID" value="NM_001077831.2"/>
</dbReference>
<dbReference type="SMR" id="P13182"/>
<dbReference type="CORUM" id="P13182"/>
<dbReference type="FunCoup" id="P13182">
    <property type="interactions" value="2557"/>
</dbReference>
<dbReference type="STRING" id="9913.ENSBTAP00000016993"/>
<dbReference type="PaxDb" id="9913-ENSBTAP00000016993"/>
<dbReference type="GeneID" id="282199"/>
<dbReference type="KEGG" id="bta:282199"/>
<dbReference type="CTD" id="1337"/>
<dbReference type="VEuPathDB" id="HostDB:ENSBTAG00000012788"/>
<dbReference type="eggNOG" id="KOG3469">
    <property type="taxonomic scope" value="Eukaryota"/>
</dbReference>
<dbReference type="HOGENOM" id="CLU_122515_1_1_1"/>
<dbReference type="InParanoid" id="P13182"/>
<dbReference type="OMA" id="MWKTLTY"/>
<dbReference type="OrthoDB" id="5947505at2759"/>
<dbReference type="TreeFam" id="TF105064"/>
<dbReference type="Reactome" id="R-BTA-5628897">
    <property type="pathway name" value="TP53 Regulates Metabolic Genes"/>
</dbReference>
<dbReference type="Reactome" id="R-BTA-611105">
    <property type="pathway name" value="Respiratory electron transport"/>
</dbReference>
<dbReference type="Reactome" id="R-BTA-9707564">
    <property type="pathway name" value="Cytoprotection by HMOX1"/>
</dbReference>
<dbReference type="Reactome" id="R-BTA-9864848">
    <property type="pathway name" value="Complex IV assembly"/>
</dbReference>
<dbReference type="UniPathway" id="UPA00705"/>
<dbReference type="Proteomes" id="UP000009136">
    <property type="component" value="Chromosome 17"/>
</dbReference>
<dbReference type="Bgee" id="ENSBTAG00000012788">
    <property type="expression patterns" value="Expressed in retina and 104 other cell types or tissues"/>
</dbReference>
<dbReference type="GO" id="GO:0005743">
    <property type="term" value="C:mitochondrial inner membrane"/>
    <property type="evidence" value="ECO:0007669"/>
    <property type="project" value="UniProtKB-SubCell"/>
</dbReference>
<dbReference type="GO" id="GO:0045277">
    <property type="term" value="C:respiratory chain complex IV"/>
    <property type="evidence" value="ECO:0000318"/>
    <property type="project" value="GO_Central"/>
</dbReference>
<dbReference type="GO" id="GO:0030234">
    <property type="term" value="F:enzyme regulator activity"/>
    <property type="evidence" value="ECO:0000318"/>
    <property type="project" value="GO_Central"/>
</dbReference>
<dbReference type="GO" id="GO:0016491">
    <property type="term" value="F:oxidoreductase activity"/>
    <property type="evidence" value="ECO:0007669"/>
    <property type="project" value="UniProtKB-KW"/>
</dbReference>
<dbReference type="GO" id="GO:0006123">
    <property type="term" value="P:mitochondrial electron transport, cytochrome c to oxygen"/>
    <property type="evidence" value="ECO:0000318"/>
    <property type="project" value="GO_Central"/>
</dbReference>
<dbReference type="CDD" id="cd00925">
    <property type="entry name" value="Cyt_c_Oxidase_VIa"/>
    <property type="match status" value="1"/>
</dbReference>
<dbReference type="FunFam" id="4.10.95.10:FF:000001">
    <property type="entry name" value="Cytochrome c oxidase subunit 6A, mitochondrial"/>
    <property type="match status" value="1"/>
</dbReference>
<dbReference type="Gene3D" id="4.10.95.10">
    <property type="entry name" value="Cytochrome c oxidase, subunit VIa"/>
    <property type="match status" value="1"/>
</dbReference>
<dbReference type="InterPro" id="IPR001349">
    <property type="entry name" value="Cyt_c_oxidase_su6a"/>
</dbReference>
<dbReference type="InterPro" id="IPR018507">
    <property type="entry name" value="Cyt_c_oxidase_su6a_CS"/>
</dbReference>
<dbReference type="InterPro" id="IPR036418">
    <property type="entry name" value="Cyt_c_oxidase_su6a_sf"/>
</dbReference>
<dbReference type="PANTHER" id="PTHR11504">
    <property type="entry name" value="CYTOCHROME C OXIDASE POLYPEPTIDE VIA"/>
    <property type="match status" value="1"/>
</dbReference>
<dbReference type="PANTHER" id="PTHR11504:SF4">
    <property type="entry name" value="CYTOCHROME C OXIDASE SUBUNIT 6A1, MITOCHONDRIAL"/>
    <property type="match status" value="1"/>
</dbReference>
<dbReference type="Pfam" id="PF02046">
    <property type="entry name" value="COX6A"/>
    <property type="match status" value="1"/>
</dbReference>
<dbReference type="PIRSF" id="PIRSF000277">
    <property type="entry name" value="COX6A1"/>
    <property type="match status" value="1"/>
</dbReference>
<dbReference type="SUPFAM" id="SSF81411">
    <property type="entry name" value="Mitochondrial cytochrome c oxidase subunit VIa"/>
    <property type="match status" value="1"/>
</dbReference>
<dbReference type="PROSITE" id="PS01329">
    <property type="entry name" value="COX6A"/>
    <property type="match status" value="1"/>
</dbReference>
<protein>
    <recommendedName>
        <fullName>Cytochrome c oxidase subunit 6A1, mitochondrial</fullName>
    </recommendedName>
    <alternativeName>
        <fullName>Cytochrome c oxidase polypeptide VIa-liver</fullName>
    </alternativeName>
    <alternativeName>
        <fullName>Cytochrome c oxidase subunit SSG</fullName>
    </alternativeName>
</protein>
<evidence type="ECO:0000250" key="1">
    <source>
        <dbReference type="UniProtKB" id="P07471"/>
    </source>
</evidence>
<evidence type="ECO:0000250" key="2">
    <source>
        <dbReference type="UniProtKB" id="P12074"/>
    </source>
</evidence>
<evidence type="ECO:0000250" key="3">
    <source>
        <dbReference type="UniProtKB" id="P32799"/>
    </source>
</evidence>
<evidence type="ECO:0000269" key="4">
    <source>
    </source>
</evidence>
<evidence type="ECO:0000305" key="5"/>
<feature type="transit peptide" description="Mitochondrion" evidence="4">
    <location>
        <begin position="1"/>
        <end position="24"/>
    </location>
</feature>
<feature type="chain" id="PRO_0000193447" description="Cytochrome c oxidase subunit 6A1, mitochondrial">
    <location>
        <begin position="25"/>
        <end position="109"/>
    </location>
</feature>
<feature type="topological domain" description="Mitochondrial matrix" evidence="1">
    <location>
        <begin position="25"/>
        <end position="34"/>
    </location>
</feature>
<feature type="transmembrane region" description="Helical" evidence="1">
    <location>
        <begin position="35"/>
        <end position="59"/>
    </location>
</feature>
<feature type="topological domain" description="Mitochondrial intermembrane" evidence="1">
    <location>
        <begin position="60"/>
        <end position="109"/>
    </location>
</feature>
<feature type="sequence conflict" description="In Ref. 2; AAA30437." evidence="5" ref="2">
    <original>Y</original>
    <variation>L</variation>
    <location>
        <position position="43"/>
    </location>
</feature>
<feature type="sequence conflict" description="In Ref. 3; AA sequence." evidence="5" ref="3">
    <original>V</original>
    <variation>L</variation>
    <location>
        <position position="52"/>
    </location>
</feature>
<feature type="sequence conflict" description="In Ref. 3; AA sequence." evidence="5" ref="3">
    <original>M</original>
    <variation>T</variation>
    <location>
        <position position="54"/>
    </location>
</feature>
<feature type="sequence conflict" description="In Ref. 2; AAA30437." evidence="5" ref="2">
    <original>L</original>
    <variation>M</variation>
    <location>
        <position position="59"/>
    </location>
</feature>
<reference key="1">
    <citation type="submission" date="2006-02" db="EMBL/GenBank/DDBJ databases">
        <authorList>
            <consortium name="NIH - Mammalian Gene Collection (MGC) project"/>
        </authorList>
    </citation>
    <scope>NUCLEOTIDE SEQUENCE [LARGE SCALE MRNA]</scope>
    <source>
        <strain>Hereford</strain>
        <tissue>Hypothalamus</tissue>
    </source>
</reference>
<reference key="2">
    <citation type="journal article" date="1991" name="FEBS Lett.">
        <title>Switching of bovine cytochrome c oxidase subunit VIa isoforms in skeletal muscle during development.</title>
        <authorList>
            <person name="Ewart G.D."/>
            <person name="Zhang Y.-Z."/>
            <person name="Capaldi R.A."/>
        </authorList>
    </citation>
    <scope>NUCLEOTIDE SEQUENCE [MRNA] OF 25-109</scope>
    <source>
        <tissue>Liver</tissue>
    </source>
</reference>
<reference key="3">
    <citation type="journal article" date="1988" name="Biochemistry">
        <title>Tissue-specific differences between heart and liver cytochrome c oxidase.</title>
        <authorList>
            <person name="Yanamura W."/>
            <person name="Zhang Y.-Z."/>
            <person name="Takamiya S."/>
            <person name="Capaldi R.A."/>
        </authorList>
    </citation>
    <scope>PROTEIN SEQUENCE OF 25-56</scope>
    <source>
        <tissue>Liver</tissue>
    </source>
</reference>
<organism>
    <name type="scientific">Bos taurus</name>
    <name type="common">Bovine</name>
    <dbReference type="NCBI Taxonomy" id="9913"/>
    <lineage>
        <taxon>Eukaryota</taxon>
        <taxon>Metazoa</taxon>
        <taxon>Chordata</taxon>
        <taxon>Craniata</taxon>
        <taxon>Vertebrata</taxon>
        <taxon>Euteleostomi</taxon>
        <taxon>Mammalia</taxon>
        <taxon>Eutheria</taxon>
        <taxon>Laurasiatheria</taxon>
        <taxon>Artiodactyla</taxon>
        <taxon>Ruminantia</taxon>
        <taxon>Pecora</taxon>
        <taxon>Bovidae</taxon>
        <taxon>Bovinae</taxon>
        <taxon>Bos</taxon>
    </lineage>
</organism>
<keyword id="KW-0903">Direct protein sequencing</keyword>
<keyword id="KW-0472">Membrane</keyword>
<keyword id="KW-0496">Mitochondrion</keyword>
<keyword id="KW-0999">Mitochondrion inner membrane</keyword>
<keyword id="KW-0560">Oxidoreductase</keyword>
<keyword id="KW-1185">Reference proteome</keyword>
<keyword id="KW-0809">Transit peptide</keyword>
<keyword id="KW-0812">Transmembrane</keyword>
<keyword id="KW-1133">Transmembrane helix</keyword>